<evidence type="ECO:0000250" key="1"/>
<evidence type="ECO:0000250" key="2">
    <source>
        <dbReference type="UniProtKB" id="O42187"/>
    </source>
</evidence>
<evidence type="ECO:0000255" key="3"/>
<evidence type="ECO:0000255" key="4">
    <source>
        <dbReference type="PROSITE-ProRule" id="PRU10035"/>
    </source>
</evidence>
<evidence type="ECO:0000255" key="5">
    <source>
        <dbReference type="PROSITE-ProRule" id="PRU10036"/>
    </source>
</evidence>
<evidence type="ECO:0000305" key="6"/>
<name>PA2BW_PROFL</name>
<comment type="function">
    <text>PLA2 catalyzes the calcium-dependent hydrolysis of the 2-acyl groups in 3-sn-phosphoglycerides.</text>
</comment>
<comment type="catalytic activity">
    <reaction evidence="4 5">
        <text>a 1,2-diacyl-sn-glycero-3-phosphocholine + H2O = a 1-acyl-sn-glycero-3-phosphocholine + a fatty acid + H(+)</text>
        <dbReference type="Rhea" id="RHEA:15801"/>
        <dbReference type="ChEBI" id="CHEBI:15377"/>
        <dbReference type="ChEBI" id="CHEBI:15378"/>
        <dbReference type="ChEBI" id="CHEBI:28868"/>
        <dbReference type="ChEBI" id="CHEBI:57643"/>
        <dbReference type="ChEBI" id="CHEBI:58168"/>
        <dbReference type="EC" id="3.1.1.4"/>
    </reaction>
</comment>
<comment type="cofactor">
    <cofactor evidence="1">
        <name>Ca(2+)</name>
        <dbReference type="ChEBI" id="CHEBI:29108"/>
    </cofactor>
    <text evidence="1">Binds 1 Ca(2+) ion.</text>
</comment>
<comment type="subcellular location">
    <subcellularLocation>
        <location>Secreted</location>
    </subcellularLocation>
</comment>
<comment type="tissue specificity">
    <text>Expressed by the venom gland.</text>
</comment>
<comment type="similarity">
    <text evidence="6">Belongs to the phospholipase A2 family. Group II subfamily. D49 sub-subfamily.</text>
</comment>
<keyword id="KW-0106">Calcium</keyword>
<keyword id="KW-1015">Disulfide bond</keyword>
<keyword id="KW-0378">Hydrolase</keyword>
<keyword id="KW-0442">Lipid degradation</keyword>
<keyword id="KW-0443">Lipid metabolism</keyword>
<keyword id="KW-0479">Metal-binding</keyword>
<keyword id="KW-0964">Secreted</keyword>
<keyword id="KW-0732">Signal</keyword>
<keyword id="KW-0800">Toxin</keyword>
<reference key="1">
    <citation type="journal article" date="1992" name="Proc. Natl. Acad. Sci. U.S.A.">
        <title>Unusually high conservation of untranslated sequences in cDNAs for Trimeresurus flavoviridis phospholipase A2 isozymes.</title>
        <authorList>
            <person name="Ogawa T."/>
            <person name="Oda N."/>
            <person name="Nakashima K."/>
            <person name="Sasaki H."/>
            <person name="Hattori M."/>
            <person name="Sakaki Y."/>
            <person name="Kihara H."/>
            <person name="Ohno M."/>
        </authorList>
    </citation>
    <scope>NUCLEOTIDE SEQUENCE [MRNA]</scope>
    <source>
        <strain>Tokunoshima</strain>
        <tissue>Venom gland</tissue>
    </source>
</reference>
<proteinExistence type="evidence at transcript level"/>
<sequence>MRTLWIMAVLLVGVEGHLLQFRKMIKKMTGKEPIVSYAFYGCYCGKGGRGKPKDATDRCCFVHDCCYEKVTGCDPKWDYYTYSSENGDIVCGGDNPCTKEVCECDKAAAICFRDNLKTYKKRYMTFPDIFCTDPTEKC</sequence>
<organism>
    <name type="scientific">Protobothrops flavoviridis</name>
    <name type="common">Habu</name>
    <name type="synonym">Trimeresurus flavoviridis</name>
    <dbReference type="NCBI Taxonomy" id="88087"/>
    <lineage>
        <taxon>Eukaryota</taxon>
        <taxon>Metazoa</taxon>
        <taxon>Chordata</taxon>
        <taxon>Craniata</taxon>
        <taxon>Vertebrata</taxon>
        <taxon>Euteleostomi</taxon>
        <taxon>Lepidosauria</taxon>
        <taxon>Squamata</taxon>
        <taxon>Bifurcata</taxon>
        <taxon>Unidentata</taxon>
        <taxon>Episquamata</taxon>
        <taxon>Toxicofera</taxon>
        <taxon>Serpentes</taxon>
        <taxon>Colubroidea</taxon>
        <taxon>Viperidae</taxon>
        <taxon>Crotalinae</taxon>
        <taxon>Protobothrops</taxon>
    </lineage>
</organism>
<dbReference type="EC" id="3.1.1.4"/>
<dbReference type="EMBL" id="D10721">
    <property type="protein sequence ID" value="BAA01564.1"/>
    <property type="molecule type" value="mRNA"/>
</dbReference>
<dbReference type="SMR" id="Q02517"/>
<dbReference type="GO" id="GO:0005576">
    <property type="term" value="C:extracellular region"/>
    <property type="evidence" value="ECO:0007669"/>
    <property type="project" value="UniProtKB-SubCell"/>
</dbReference>
<dbReference type="GO" id="GO:0005509">
    <property type="term" value="F:calcium ion binding"/>
    <property type="evidence" value="ECO:0007669"/>
    <property type="project" value="InterPro"/>
</dbReference>
<dbReference type="GO" id="GO:0047498">
    <property type="term" value="F:calcium-dependent phospholipase A2 activity"/>
    <property type="evidence" value="ECO:0007669"/>
    <property type="project" value="TreeGrafter"/>
</dbReference>
<dbReference type="GO" id="GO:0005543">
    <property type="term" value="F:phospholipid binding"/>
    <property type="evidence" value="ECO:0007669"/>
    <property type="project" value="TreeGrafter"/>
</dbReference>
<dbReference type="GO" id="GO:0090729">
    <property type="term" value="F:toxin activity"/>
    <property type="evidence" value="ECO:0007669"/>
    <property type="project" value="UniProtKB-KW"/>
</dbReference>
<dbReference type="GO" id="GO:0050482">
    <property type="term" value="P:arachidonate secretion"/>
    <property type="evidence" value="ECO:0007669"/>
    <property type="project" value="InterPro"/>
</dbReference>
<dbReference type="GO" id="GO:0016042">
    <property type="term" value="P:lipid catabolic process"/>
    <property type="evidence" value="ECO:0007669"/>
    <property type="project" value="UniProtKB-KW"/>
</dbReference>
<dbReference type="GO" id="GO:0042130">
    <property type="term" value="P:negative regulation of T cell proliferation"/>
    <property type="evidence" value="ECO:0007669"/>
    <property type="project" value="TreeGrafter"/>
</dbReference>
<dbReference type="GO" id="GO:0006644">
    <property type="term" value="P:phospholipid metabolic process"/>
    <property type="evidence" value="ECO:0007669"/>
    <property type="project" value="InterPro"/>
</dbReference>
<dbReference type="CDD" id="cd00125">
    <property type="entry name" value="PLA2c"/>
    <property type="match status" value="1"/>
</dbReference>
<dbReference type="FunFam" id="1.20.90.10:FF:000001">
    <property type="entry name" value="Basic phospholipase A2 homolog"/>
    <property type="match status" value="1"/>
</dbReference>
<dbReference type="Gene3D" id="1.20.90.10">
    <property type="entry name" value="Phospholipase A2 domain"/>
    <property type="match status" value="1"/>
</dbReference>
<dbReference type="InterPro" id="IPR001211">
    <property type="entry name" value="PLipase_A2"/>
</dbReference>
<dbReference type="InterPro" id="IPR033112">
    <property type="entry name" value="PLipase_A2_Asp_AS"/>
</dbReference>
<dbReference type="InterPro" id="IPR016090">
    <property type="entry name" value="PLipase_A2_dom"/>
</dbReference>
<dbReference type="InterPro" id="IPR036444">
    <property type="entry name" value="PLipase_A2_dom_sf"/>
</dbReference>
<dbReference type="InterPro" id="IPR033113">
    <property type="entry name" value="PLipase_A2_His_AS"/>
</dbReference>
<dbReference type="PANTHER" id="PTHR11716">
    <property type="entry name" value="PHOSPHOLIPASE A2 FAMILY MEMBER"/>
    <property type="match status" value="1"/>
</dbReference>
<dbReference type="PANTHER" id="PTHR11716:SF9">
    <property type="entry name" value="PHOSPHOLIPASE A2, MEMBRANE ASSOCIATED"/>
    <property type="match status" value="1"/>
</dbReference>
<dbReference type="Pfam" id="PF00068">
    <property type="entry name" value="Phospholip_A2_1"/>
    <property type="match status" value="1"/>
</dbReference>
<dbReference type="PRINTS" id="PR00389">
    <property type="entry name" value="PHPHLIPASEA2"/>
</dbReference>
<dbReference type="SMART" id="SM00085">
    <property type="entry name" value="PA2c"/>
    <property type="match status" value="1"/>
</dbReference>
<dbReference type="SUPFAM" id="SSF48619">
    <property type="entry name" value="Phospholipase A2, PLA2"/>
    <property type="match status" value="1"/>
</dbReference>
<dbReference type="PROSITE" id="PS00119">
    <property type="entry name" value="PA2_ASP"/>
    <property type="match status" value="1"/>
</dbReference>
<dbReference type="PROSITE" id="PS00118">
    <property type="entry name" value="PA2_HIS"/>
    <property type="match status" value="1"/>
</dbReference>
<protein>
    <recommendedName>
        <fullName>Basic phospholipase A2 PL-X'</fullName>
        <shortName>svPLA2</shortName>
        <ecNumber>3.1.1.4</ecNumber>
    </recommendedName>
    <alternativeName>
        <fullName>Phosphatidylcholine 2-acylhydrolase</fullName>
    </alternativeName>
</protein>
<accession>Q02517</accession>
<feature type="signal peptide" evidence="3">
    <location>
        <begin position="1"/>
        <end position="16"/>
    </location>
</feature>
<feature type="chain" id="PRO_0000022957" description="Basic phospholipase A2 PL-X'">
    <location>
        <begin position="17"/>
        <end position="138"/>
    </location>
</feature>
<feature type="active site" evidence="2">
    <location>
        <position position="63"/>
    </location>
</feature>
<feature type="active site" evidence="2">
    <location>
        <position position="105"/>
    </location>
</feature>
<feature type="binding site" evidence="2">
    <location>
        <position position="43"/>
    </location>
    <ligand>
        <name>Ca(2+)</name>
        <dbReference type="ChEBI" id="CHEBI:29108"/>
    </ligand>
</feature>
<feature type="binding site" evidence="2">
    <location>
        <position position="45"/>
    </location>
    <ligand>
        <name>Ca(2+)</name>
        <dbReference type="ChEBI" id="CHEBI:29108"/>
    </ligand>
</feature>
<feature type="binding site" evidence="2">
    <location>
        <position position="47"/>
    </location>
    <ligand>
        <name>Ca(2+)</name>
        <dbReference type="ChEBI" id="CHEBI:29108"/>
    </ligand>
</feature>
<feature type="binding site" evidence="2">
    <location>
        <position position="64"/>
    </location>
    <ligand>
        <name>Ca(2+)</name>
        <dbReference type="ChEBI" id="CHEBI:29108"/>
    </ligand>
</feature>
<feature type="disulfide bond" evidence="2">
    <location>
        <begin position="42"/>
        <end position="131"/>
    </location>
</feature>
<feature type="disulfide bond" evidence="2">
    <location>
        <begin position="44"/>
        <end position="60"/>
    </location>
</feature>
<feature type="disulfide bond" evidence="2">
    <location>
        <begin position="59"/>
        <end position="111"/>
    </location>
</feature>
<feature type="disulfide bond" evidence="2">
    <location>
        <begin position="65"/>
        <end position="138"/>
    </location>
</feature>
<feature type="disulfide bond" evidence="2">
    <location>
        <begin position="66"/>
        <end position="104"/>
    </location>
</feature>
<feature type="disulfide bond" evidence="2">
    <location>
        <begin position="73"/>
        <end position="97"/>
    </location>
</feature>
<feature type="disulfide bond" evidence="2">
    <location>
        <begin position="91"/>
        <end position="102"/>
    </location>
</feature>